<proteinExistence type="inferred from homology"/>
<reference key="1">
    <citation type="submission" date="2003-01" db="EMBL/GenBank/DDBJ databases">
        <title>Chloroplast DNA phylogeny of tribe Heliantheae (Asteraceae).</title>
        <authorList>
            <person name="Panero J.L."/>
            <person name="Baldwin B.G."/>
            <person name="Schilling E.E."/>
            <person name="Clevinger J.A."/>
        </authorList>
    </citation>
    <scope>NUCLEOTIDE SEQUENCE [GENOMIC DNA]</scope>
</reference>
<protein>
    <recommendedName>
        <fullName evidence="1">NAD(P)H-quinone oxidoreductase subunit I, chloroplastic</fullName>
        <ecNumber evidence="1">7.1.1.-</ecNumber>
    </recommendedName>
    <alternativeName>
        <fullName evidence="1">NAD(P)H dehydrogenase subunit I</fullName>
        <shortName evidence="1">NDH subunit I</shortName>
    </alternativeName>
    <alternativeName>
        <fullName evidence="1">NADH-plastoquinone oxidoreductase subunit I</fullName>
    </alternativeName>
</protein>
<comment type="function">
    <text evidence="1">NDH shuttles electrons from NAD(P)H:plastoquinone, via FMN and iron-sulfur (Fe-S) centers, to quinones in the photosynthetic chain and possibly in a chloroplast respiratory chain. The immediate electron acceptor for the enzyme in this species is believed to be plastoquinone. Couples the redox reaction to proton translocation, and thus conserves the redox energy in a proton gradient.</text>
</comment>
<comment type="catalytic activity">
    <reaction evidence="1">
        <text>a plastoquinone + NADH + (n+1) H(+)(in) = a plastoquinol + NAD(+) + n H(+)(out)</text>
        <dbReference type="Rhea" id="RHEA:42608"/>
        <dbReference type="Rhea" id="RHEA-COMP:9561"/>
        <dbReference type="Rhea" id="RHEA-COMP:9562"/>
        <dbReference type="ChEBI" id="CHEBI:15378"/>
        <dbReference type="ChEBI" id="CHEBI:17757"/>
        <dbReference type="ChEBI" id="CHEBI:57540"/>
        <dbReference type="ChEBI" id="CHEBI:57945"/>
        <dbReference type="ChEBI" id="CHEBI:62192"/>
    </reaction>
</comment>
<comment type="catalytic activity">
    <reaction evidence="1">
        <text>a plastoquinone + NADPH + (n+1) H(+)(in) = a plastoquinol + NADP(+) + n H(+)(out)</text>
        <dbReference type="Rhea" id="RHEA:42612"/>
        <dbReference type="Rhea" id="RHEA-COMP:9561"/>
        <dbReference type="Rhea" id="RHEA-COMP:9562"/>
        <dbReference type="ChEBI" id="CHEBI:15378"/>
        <dbReference type="ChEBI" id="CHEBI:17757"/>
        <dbReference type="ChEBI" id="CHEBI:57783"/>
        <dbReference type="ChEBI" id="CHEBI:58349"/>
        <dbReference type="ChEBI" id="CHEBI:62192"/>
    </reaction>
</comment>
<comment type="cofactor">
    <cofactor evidence="1">
        <name>[4Fe-4S] cluster</name>
        <dbReference type="ChEBI" id="CHEBI:49883"/>
    </cofactor>
    <text evidence="1">Binds 2 [4Fe-4S] clusters per subunit.</text>
</comment>
<comment type="subunit">
    <text evidence="1">NDH is composed of at least 16 different subunits, 5 of which are encoded in the nucleus.</text>
</comment>
<comment type="subcellular location">
    <subcellularLocation>
        <location evidence="1">Plastid</location>
        <location evidence="1">Chloroplast thylakoid membrane</location>
        <topology evidence="1">Peripheral membrane protein</topology>
    </subcellularLocation>
</comment>
<comment type="similarity">
    <text evidence="1">Belongs to the complex I 23 kDa subunit family.</text>
</comment>
<name>NDHI_PSIGN</name>
<evidence type="ECO:0000255" key="1">
    <source>
        <dbReference type="HAMAP-Rule" id="MF_01351"/>
    </source>
</evidence>
<dbReference type="EC" id="7.1.1.-" evidence="1"/>
<dbReference type="EMBL" id="AF383841">
    <property type="protein sequence ID" value="AAN61782.1"/>
    <property type="molecule type" value="Genomic_DNA"/>
</dbReference>
<dbReference type="SMR" id="Q8HVM2"/>
<dbReference type="GO" id="GO:0009535">
    <property type="term" value="C:chloroplast thylakoid membrane"/>
    <property type="evidence" value="ECO:0007669"/>
    <property type="project" value="UniProtKB-SubCell"/>
</dbReference>
<dbReference type="GO" id="GO:0051539">
    <property type="term" value="F:4 iron, 4 sulfur cluster binding"/>
    <property type="evidence" value="ECO:0007669"/>
    <property type="project" value="UniProtKB-KW"/>
</dbReference>
<dbReference type="GO" id="GO:0005506">
    <property type="term" value="F:iron ion binding"/>
    <property type="evidence" value="ECO:0007669"/>
    <property type="project" value="UniProtKB-UniRule"/>
</dbReference>
<dbReference type="GO" id="GO:0008137">
    <property type="term" value="F:NADH dehydrogenase (ubiquinone) activity"/>
    <property type="evidence" value="ECO:0007669"/>
    <property type="project" value="InterPro"/>
</dbReference>
<dbReference type="GO" id="GO:0048038">
    <property type="term" value="F:quinone binding"/>
    <property type="evidence" value="ECO:0007669"/>
    <property type="project" value="UniProtKB-KW"/>
</dbReference>
<dbReference type="GO" id="GO:0019684">
    <property type="term" value="P:photosynthesis, light reaction"/>
    <property type="evidence" value="ECO:0007669"/>
    <property type="project" value="UniProtKB-UniRule"/>
</dbReference>
<dbReference type="FunFam" id="3.30.70.3270:FF:000006">
    <property type="entry name" value="NAD(P)H-quinone oxidoreductase subunit I, chloroplastic"/>
    <property type="match status" value="1"/>
</dbReference>
<dbReference type="Gene3D" id="3.30.70.3270">
    <property type="match status" value="1"/>
</dbReference>
<dbReference type="HAMAP" id="MF_01351">
    <property type="entry name" value="NDH1_NuoI"/>
    <property type="match status" value="1"/>
</dbReference>
<dbReference type="InterPro" id="IPR017896">
    <property type="entry name" value="4Fe4S_Fe-S-bd"/>
</dbReference>
<dbReference type="InterPro" id="IPR017900">
    <property type="entry name" value="4Fe4S_Fe_S_CS"/>
</dbReference>
<dbReference type="InterPro" id="IPR010226">
    <property type="entry name" value="NADH_quinone_OxRdtase_chainI"/>
</dbReference>
<dbReference type="InterPro" id="IPR004497">
    <property type="entry name" value="NDHI"/>
</dbReference>
<dbReference type="NCBIfam" id="TIGR00403">
    <property type="entry name" value="ndhI"/>
    <property type="match status" value="1"/>
</dbReference>
<dbReference type="NCBIfam" id="TIGR01971">
    <property type="entry name" value="NuoI"/>
    <property type="match status" value="1"/>
</dbReference>
<dbReference type="NCBIfam" id="NF004537">
    <property type="entry name" value="PRK05888.1-3"/>
    <property type="match status" value="1"/>
</dbReference>
<dbReference type="PANTHER" id="PTHR47275">
    <property type="entry name" value="NAD(P)H-QUINONE OXIDOREDUCTASE SUBUNIT I, CHLOROPLASTIC"/>
    <property type="match status" value="1"/>
</dbReference>
<dbReference type="PANTHER" id="PTHR47275:SF1">
    <property type="entry name" value="NAD(P)H-QUINONE OXIDOREDUCTASE SUBUNIT I, CHLOROPLASTIC"/>
    <property type="match status" value="1"/>
</dbReference>
<dbReference type="Pfam" id="PF00037">
    <property type="entry name" value="Fer4"/>
    <property type="match status" value="2"/>
</dbReference>
<dbReference type="SUPFAM" id="SSF54862">
    <property type="entry name" value="4Fe-4S ferredoxins"/>
    <property type="match status" value="1"/>
</dbReference>
<dbReference type="PROSITE" id="PS00198">
    <property type="entry name" value="4FE4S_FER_1"/>
    <property type="match status" value="2"/>
</dbReference>
<dbReference type="PROSITE" id="PS51379">
    <property type="entry name" value="4FE4S_FER_2"/>
    <property type="match status" value="2"/>
</dbReference>
<organism>
    <name type="scientific">Psilostrophe gnaphalodes</name>
    <name type="common">Dudweed</name>
    <dbReference type="NCBI Taxonomy" id="41626"/>
    <lineage>
        <taxon>Eukaryota</taxon>
        <taxon>Viridiplantae</taxon>
        <taxon>Streptophyta</taxon>
        <taxon>Embryophyta</taxon>
        <taxon>Tracheophyta</taxon>
        <taxon>Spermatophyta</taxon>
        <taxon>Magnoliopsida</taxon>
        <taxon>eudicotyledons</taxon>
        <taxon>Gunneridae</taxon>
        <taxon>Pentapetalae</taxon>
        <taxon>asterids</taxon>
        <taxon>campanulids</taxon>
        <taxon>Asterales</taxon>
        <taxon>Asteraceae</taxon>
        <taxon>Asteroideae</taxon>
        <taxon>Heliantheae alliance</taxon>
        <taxon>Helenieae</taxon>
        <taxon>Tetraneurinae</taxon>
        <taxon>Psilostrophe</taxon>
    </lineage>
</organism>
<sequence length="166" mass="19451">MFPMVTEFMNYGQQTVRAARYIGQGFMITLSHANRLPVTIQYPYEKLITSERFRGRIHFEFDKCIACEVCVRVCPIDLPVVDWKLETDIRKKRLLNYSIDFGICIFCGNCVEYCPTNCLSMTEEYELSTYDRHELNYNQIALGRLPMSVIDDYTIRTILNLSEIKT</sequence>
<gene>
    <name evidence="1" type="primary">ndhI</name>
</gene>
<keyword id="KW-0004">4Fe-4S</keyword>
<keyword id="KW-0150">Chloroplast</keyword>
<keyword id="KW-0408">Iron</keyword>
<keyword id="KW-0411">Iron-sulfur</keyword>
<keyword id="KW-0472">Membrane</keyword>
<keyword id="KW-0479">Metal-binding</keyword>
<keyword id="KW-0520">NAD</keyword>
<keyword id="KW-0521">NADP</keyword>
<keyword id="KW-0934">Plastid</keyword>
<keyword id="KW-0618">Plastoquinone</keyword>
<keyword id="KW-0874">Quinone</keyword>
<keyword id="KW-0677">Repeat</keyword>
<keyword id="KW-0793">Thylakoid</keyword>
<keyword id="KW-1278">Translocase</keyword>
<geneLocation type="chloroplast"/>
<feature type="chain" id="PRO_0000250840" description="NAD(P)H-quinone oxidoreductase subunit I, chloroplastic">
    <location>
        <begin position="1"/>
        <end position="166"/>
    </location>
</feature>
<feature type="domain" description="4Fe-4S ferredoxin-type 1" evidence="1">
    <location>
        <begin position="55"/>
        <end position="84"/>
    </location>
</feature>
<feature type="domain" description="4Fe-4S ferredoxin-type 2" evidence="1">
    <location>
        <begin position="95"/>
        <end position="124"/>
    </location>
</feature>
<feature type="binding site" evidence="1">
    <location>
        <position position="64"/>
    </location>
    <ligand>
        <name>[4Fe-4S] cluster</name>
        <dbReference type="ChEBI" id="CHEBI:49883"/>
        <label>1</label>
    </ligand>
</feature>
<feature type="binding site" evidence="1">
    <location>
        <position position="67"/>
    </location>
    <ligand>
        <name>[4Fe-4S] cluster</name>
        <dbReference type="ChEBI" id="CHEBI:49883"/>
        <label>1</label>
    </ligand>
</feature>
<feature type="binding site" evidence="1">
    <location>
        <position position="70"/>
    </location>
    <ligand>
        <name>[4Fe-4S] cluster</name>
        <dbReference type="ChEBI" id="CHEBI:49883"/>
        <label>1</label>
    </ligand>
</feature>
<feature type="binding site" evidence="1">
    <location>
        <position position="74"/>
    </location>
    <ligand>
        <name>[4Fe-4S] cluster</name>
        <dbReference type="ChEBI" id="CHEBI:49883"/>
        <label>2</label>
    </ligand>
</feature>
<feature type="binding site" evidence="1">
    <location>
        <position position="104"/>
    </location>
    <ligand>
        <name>[4Fe-4S] cluster</name>
        <dbReference type="ChEBI" id="CHEBI:49883"/>
        <label>2</label>
    </ligand>
</feature>
<feature type="binding site" evidence="1">
    <location>
        <position position="107"/>
    </location>
    <ligand>
        <name>[4Fe-4S] cluster</name>
        <dbReference type="ChEBI" id="CHEBI:49883"/>
        <label>2</label>
    </ligand>
</feature>
<feature type="binding site" evidence="1">
    <location>
        <position position="110"/>
    </location>
    <ligand>
        <name>[4Fe-4S] cluster</name>
        <dbReference type="ChEBI" id="CHEBI:49883"/>
        <label>2</label>
    </ligand>
</feature>
<feature type="binding site" evidence="1">
    <location>
        <position position="114"/>
    </location>
    <ligand>
        <name>[4Fe-4S] cluster</name>
        <dbReference type="ChEBI" id="CHEBI:49883"/>
        <label>1</label>
    </ligand>
</feature>
<accession>Q8HVM2</accession>